<comment type="function">
    <text evidence="1">Is associated with a DNA binding complex that binds to the G box, a well-characterized cis-acting DNA regulatory element found in plant genes.</text>
</comment>
<comment type="subcellular location">
    <subcellularLocation>
        <location evidence="2">Cytoplasm</location>
    </subcellularLocation>
    <subcellularLocation>
        <location evidence="2">Nucleus</location>
    </subcellularLocation>
</comment>
<comment type="tissue specificity">
    <text evidence="2">Ubiquitous.</text>
</comment>
<comment type="induction">
    <text evidence="2">By wounding, drought and salt stresses, benzothiadiazole (BTH), ethephon, methyl jasmonate (MeJa), hydrogen peroxide, abscisic acid (ABA) and incompatible and compatible races of rice blast fungus (M.grisea) and rice bacterial blight (X.oryzae).</text>
</comment>
<comment type="similarity">
    <text evidence="3">Belongs to the 14-3-3 family.</text>
</comment>
<organism>
    <name type="scientific">Oryza sativa subsp. japonica</name>
    <name type="common">Rice</name>
    <dbReference type="NCBI Taxonomy" id="39947"/>
    <lineage>
        <taxon>Eukaryota</taxon>
        <taxon>Viridiplantae</taxon>
        <taxon>Streptophyta</taxon>
        <taxon>Embryophyta</taxon>
        <taxon>Tracheophyta</taxon>
        <taxon>Spermatophyta</taxon>
        <taxon>Magnoliopsida</taxon>
        <taxon>Liliopsida</taxon>
        <taxon>Poales</taxon>
        <taxon>Poaceae</taxon>
        <taxon>BOP clade</taxon>
        <taxon>Oryzoideae</taxon>
        <taxon>Oryzeae</taxon>
        <taxon>Oryzinae</taxon>
        <taxon>Oryza</taxon>
        <taxon>Oryza sativa</taxon>
    </lineage>
</organism>
<protein>
    <recommendedName>
        <fullName>14-3-3-like protein GF14-E</fullName>
    </recommendedName>
    <alternativeName>
        <fullName>G-box factor 14-3-3 homolog E</fullName>
    </alternativeName>
</protein>
<evidence type="ECO:0000250" key="1"/>
<evidence type="ECO:0000269" key="2">
    <source>
    </source>
</evidence>
<evidence type="ECO:0000305" key="3"/>
<evidence type="ECO:0000312" key="4">
    <source>
        <dbReference type="EMBL" id="EEE57254.1"/>
    </source>
</evidence>
<keyword id="KW-0963">Cytoplasm</keyword>
<keyword id="KW-0539">Nucleus</keyword>
<keyword id="KW-1185">Reference proteome</keyword>
<gene>
    <name type="primary">GF14E</name>
    <name type="ordered locus">Os02g0580300</name>
    <name type="ordered locus">LOC_Os02g36974</name>
    <name type="ORF">B1267B06.30-1</name>
    <name type="ORF">OJ1115_A05.5-1</name>
    <name evidence="4" type="ORF">OsJ_07268</name>
</gene>
<name>14335_ORYSJ</name>
<accession>Q6EUP4</accession>
<accession>Q0E040</accession>
<accession>Q9M3X9</accession>
<proteinExistence type="evidence at transcript level"/>
<dbReference type="EMBL" id="AJ276594">
    <property type="protein sequence ID" value="CAB77673.1"/>
    <property type="molecule type" value="mRNA"/>
</dbReference>
<dbReference type="EMBL" id="AP003999">
    <property type="protein sequence ID" value="BAD27625.1"/>
    <property type="molecule type" value="Genomic_DNA"/>
</dbReference>
<dbReference type="EMBL" id="AP006161">
    <property type="protein sequence ID" value="BAD29578.1"/>
    <property type="molecule type" value="Genomic_DNA"/>
</dbReference>
<dbReference type="EMBL" id="AP008208">
    <property type="protein sequence ID" value="BAF09148.1"/>
    <property type="molecule type" value="Genomic_DNA"/>
</dbReference>
<dbReference type="EMBL" id="AP014958">
    <property type="protein sequence ID" value="BAS79413.1"/>
    <property type="molecule type" value="Genomic_DNA"/>
</dbReference>
<dbReference type="EMBL" id="CM000139">
    <property type="protein sequence ID" value="EEE57254.1"/>
    <property type="molecule type" value="Genomic_DNA"/>
</dbReference>
<dbReference type="EMBL" id="AK068248">
    <property type="protein sequence ID" value="BAG90825.1"/>
    <property type="molecule type" value="mRNA"/>
</dbReference>
<dbReference type="EMBL" id="AK104907">
    <property type="protein sequence ID" value="BAG97021.1"/>
    <property type="molecule type" value="mRNA"/>
</dbReference>
<dbReference type="RefSeq" id="XP_015626227.1">
    <property type="nucleotide sequence ID" value="XM_015770741.1"/>
</dbReference>
<dbReference type="RefSeq" id="XP_015626229.1">
    <property type="nucleotide sequence ID" value="XM_015770743.1"/>
</dbReference>
<dbReference type="RefSeq" id="XP_015626230.1">
    <property type="nucleotide sequence ID" value="XM_015770744.1"/>
</dbReference>
<dbReference type="SMR" id="Q6EUP4"/>
<dbReference type="DIP" id="DIP-46489N"/>
<dbReference type="FunCoup" id="Q6EUP4">
    <property type="interactions" value="2576"/>
</dbReference>
<dbReference type="IntAct" id="Q6EUP4">
    <property type="interactions" value="2"/>
</dbReference>
<dbReference type="STRING" id="39947.Q6EUP4"/>
<dbReference type="PaxDb" id="39947-Q6EUP4"/>
<dbReference type="EnsemblPlants" id="Os02t0580300-01">
    <property type="protein sequence ID" value="Os02t0580300-01"/>
    <property type="gene ID" value="Os02g0580300"/>
</dbReference>
<dbReference type="EnsemblPlants" id="Os02t0580300-02">
    <property type="protein sequence ID" value="Os02t0580300-02"/>
    <property type="gene ID" value="Os02g0580300"/>
</dbReference>
<dbReference type="EnsemblPlants" id="Os02t0580300-03">
    <property type="protein sequence ID" value="Os02t0580300-03"/>
    <property type="gene ID" value="Os02g0580300"/>
</dbReference>
<dbReference type="Gramene" id="Os02t0580300-01">
    <property type="protein sequence ID" value="Os02t0580300-01"/>
    <property type="gene ID" value="Os02g0580300"/>
</dbReference>
<dbReference type="Gramene" id="Os02t0580300-02">
    <property type="protein sequence ID" value="Os02t0580300-02"/>
    <property type="gene ID" value="Os02g0580300"/>
</dbReference>
<dbReference type="Gramene" id="Os02t0580300-03">
    <property type="protein sequence ID" value="Os02t0580300-03"/>
    <property type="gene ID" value="Os02g0580300"/>
</dbReference>
<dbReference type="KEGG" id="dosa:Os02g0580300"/>
<dbReference type="eggNOG" id="KOG0841">
    <property type="taxonomic scope" value="Eukaryota"/>
</dbReference>
<dbReference type="HOGENOM" id="CLU_058290_0_0_1"/>
<dbReference type="InParanoid" id="Q6EUP4"/>
<dbReference type="OMA" id="NQASECE"/>
<dbReference type="OrthoDB" id="10260625at2759"/>
<dbReference type="PlantReactome" id="R-OSA-5632095">
    <property type="pathway name" value="Brassinosteroid signaling"/>
</dbReference>
<dbReference type="Proteomes" id="UP000000763">
    <property type="component" value="Chromosome 2"/>
</dbReference>
<dbReference type="Proteomes" id="UP000007752">
    <property type="component" value="Chromosome 2"/>
</dbReference>
<dbReference type="Proteomes" id="UP000059680">
    <property type="component" value="Chromosome 2"/>
</dbReference>
<dbReference type="ExpressionAtlas" id="Q6EUP4">
    <property type="expression patterns" value="baseline and differential"/>
</dbReference>
<dbReference type="GO" id="GO:0005737">
    <property type="term" value="C:cytoplasm"/>
    <property type="evidence" value="ECO:0007669"/>
    <property type="project" value="UniProtKB-SubCell"/>
</dbReference>
<dbReference type="GO" id="GO:0005634">
    <property type="term" value="C:nucleus"/>
    <property type="evidence" value="ECO:0007669"/>
    <property type="project" value="UniProtKB-SubCell"/>
</dbReference>
<dbReference type="FunFam" id="1.20.190.20:FF:000002">
    <property type="entry name" value="14-3-3 protein epsilon"/>
    <property type="match status" value="1"/>
</dbReference>
<dbReference type="Gene3D" id="1.20.190.20">
    <property type="entry name" value="14-3-3 domain"/>
    <property type="match status" value="1"/>
</dbReference>
<dbReference type="InterPro" id="IPR000308">
    <property type="entry name" value="14-3-3"/>
</dbReference>
<dbReference type="InterPro" id="IPR023409">
    <property type="entry name" value="14-3-3_CS"/>
</dbReference>
<dbReference type="InterPro" id="IPR036815">
    <property type="entry name" value="14-3-3_dom_sf"/>
</dbReference>
<dbReference type="InterPro" id="IPR023410">
    <property type="entry name" value="14-3-3_domain"/>
</dbReference>
<dbReference type="PANTHER" id="PTHR18860">
    <property type="entry name" value="14-3-3 PROTEIN"/>
    <property type="match status" value="1"/>
</dbReference>
<dbReference type="Pfam" id="PF00244">
    <property type="entry name" value="14-3-3"/>
    <property type="match status" value="1"/>
</dbReference>
<dbReference type="PIRSF" id="PIRSF000868">
    <property type="entry name" value="14-3-3"/>
    <property type="match status" value="1"/>
</dbReference>
<dbReference type="PRINTS" id="PR00305">
    <property type="entry name" value="1433ZETA"/>
</dbReference>
<dbReference type="SMART" id="SM00101">
    <property type="entry name" value="14_3_3"/>
    <property type="match status" value="1"/>
</dbReference>
<dbReference type="SUPFAM" id="SSF48445">
    <property type="entry name" value="14-3-3 protein"/>
    <property type="match status" value="1"/>
</dbReference>
<dbReference type="PROSITE" id="PS00796">
    <property type="entry name" value="1433_1"/>
    <property type="match status" value="1"/>
</dbReference>
<dbReference type="PROSITE" id="PS00797">
    <property type="entry name" value="1433_2"/>
    <property type="match status" value="1"/>
</dbReference>
<sequence>MSQPAELSREENVYMAKLAEQAERYEEMVEFMEKVAKTVDSEELTVEERNLLSVAYKNVIGARRASWRIISSIEQKEESRGNEDRCTLIKEYRGKIETELSKICDGILKLLDSHLVPSSTAPESKVFYLKMKGDYYRYLAEFKTGAERKDAAENTMVAYKAAQDIALAELPPTHPIRLGLALNFSVFYYEILNSPDRACNLAKQAFDEAISELDTLSEESYKDSTLIMQLLRDNLTLWTSDISEDAAEEIKEAPKGESGDGQ</sequence>
<reference key="1">
    <citation type="submission" date="2000-03" db="EMBL/GenBank/DDBJ databases">
        <authorList>
            <person name="Fabian T."/>
            <person name="Huss S."/>
            <person name="Sauter M."/>
        </authorList>
    </citation>
    <scope>NUCLEOTIDE SEQUENCE [MRNA]</scope>
    <source>
        <tissue>Meristem</tissue>
    </source>
</reference>
<reference key="2">
    <citation type="journal article" date="2005" name="Nature">
        <title>The map-based sequence of the rice genome.</title>
        <authorList>
            <consortium name="International rice genome sequencing project (IRGSP)"/>
        </authorList>
    </citation>
    <scope>NUCLEOTIDE SEQUENCE [LARGE SCALE GENOMIC DNA]</scope>
    <source>
        <strain>cv. Nipponbare</strain>
    </source>
</reference>
<reference key="3">
    <citation type="journal article" date="2008" name="Nucleic Acids Res.">
        <title>The rice annotation project database (RAP-DB): 2008 update.</title>
        <authorList>
            <consortium name="The rice annotation project (RAP)"/>
        </authorList>
    </citation>
    <scope>GENOME REANNOTATION</scope>
    <source>
        <strain>cv. Nipponbare</strain>
    </source>
</reference>
<reference key="4">
    <citation type="journal article" date="2013" name="Rice">
        <title>Improvement of the Oryza sativa Nipponbare reference genome using next generation sequence and optical map data.</title>
        <authorList>
            <person name="Kawahara Y."/>
            <person name="de la Bastide M."/>
            <person name="Hamilton J.P."/>
            <person name="Kanamori H."/>
            <person name="McCombie W.R."/>
            <person name="Ouyang S."/>
            <person name="Schwartz D.C."/>
            <person name="Tanaka T."/>
            <person name="Wu J."/>
            <person name="Zhou S."/>
            <person name="Childs K.L."/>
            <person name="Davidson R.M."/>
            <person name="Lin H."/>
            <person name="Quesada-Ocampo L."/>
            <person name="Vaillancourt B."/>
            <person name="Sakai H."/>
            <person name="Lee S.S."/>
            <person name="Kim J."/>
            <person name="Numa H."/>
            <person name="Itoh T."/>
            <person name="Buell C.R."/>
            <person name="Matsumoto T."/>
        </authorList>
    </citation>
    <scope>GENOME REANNOTATION</scope>
    <source>
        <strain>cv. Nipponbare</strain>
    </source>
</reference>
<reference key="5">
    <citation type="journal article" date="2005" name="PLoS Biol.">
        <title>The genomes of Oryza sativa: a history of duplications.</title>
        <authorList>
            <person name="Yu J."/>
            <person name="Wang J."/>
            <person name="Lin W."/>
            <person name="Li S."/>
            <person name="Li H."/>
            <person name="Zhou J."/>
            <person name="Ni P."/>
            <person name="Dong W."/>
            <person name="Hu S."/>
            <person name="Zeng C."/>
            <person name="Zhang J."/>
            <person name="Zhang Y."/>
            <person name="Li R."/>
            <person name="Xu Z."/>
            <person name="Li S."/>
            <person name="Li X."/>
            <person name="Zheng H."/>
            <person name="Cong L."/>
            <person name="Lin L."/>
            <person name="Yin J."/>
            <person name="Geng J."/>
            <person name="Li G."/>
            <person name="Shi J."/>
            <person name="Liu J."/>
            <person name="Lv H."/>
            <person name="Li J."/>
            <person name="Wang J."/>
            <person name="Deng Y."/>
            <person name="Ran L."/>
            <person name="Shi X."/>
            <person name="Wang X."/>
            <person name="Wu Q."/>
            <person name="Li C."/>
            <person name="Ren X."/>
            <person name="Wang J."/>
            <person name="Wang X."/>
            <person name="Li D."/>
            <person name="Liu D."/>
            <person name="Zhang X."/>
            <person name="Ji Z."/>
            <person name="Zhao W."/>
            <person name="Sun Y."/>
            <person name="Zhang Z."/>
            <person name="Bao J."/>
            <person name="Han Y."/>
            <person name="Dong L."/>
            <person name="Ji J."/>
            <person name="Chen P."/>
            <person name="Wu S."/>
            <person name="Liu J."/>
            <person name="Xiao Y."/>
            <person name="Bu D."/>
            <person name="Tan J."/>
            <person name="Yang L."/>
            <person name="Ye C."/>
            <person name="Zhang J."/>
            <person name="Xu J."/>
            <person name="Zhou Y."/>
            <person name="Yu Y."/>
            <person name="Zhang B."/>
            <person name="Zhuang S."/>
            <person name="Wei H."/>
            <person name="Liu B."/>
            <person name="Lei M."/>
            <person name="Yu H."/>
            <person name="Li Y."/>
            <person name="Xu H."/>
            <person name="Wei S."/>
            <person name="He X."/>
            <person name="Fang L."/>
            <person name="Zhang Z."/>
            <person name="Zhang Y."/>
            <person name="Huang X."/>
            <person name="Su Z."/>
            <person name="Tong W."/>
            <person name="Li J."/>
            <person name="Tong Z."/>
            <person name="Li S."/>
            <person name="Ye J."/>
            <person name="Wang L."/>
            <person name="Fang L."/>
            <person name="Lei T."/>
            <person name="Chen C.-S."/>
            <person name="Chen H.-C."/>
            <person name="Xu Z."/>
            <person name="Li H."/>
            <person name="Huang H."/>
            <person name="Zhang F."/>
            <person name="Xu H."/>
            <person name="Li N."/>
            <person name="Zhao C."/>
            <person name="Li S."/>
            <person name="Dong L."/>
            <person name="Huang Y."/>
            <person name="Li L."/>
            <person name="Xi Y."/>
            <person name="Qi Q."/>
            <person name="Li W."/>
            <person name="Zhang B."/>
            <person name="Hu W."/>
            <person name="Zhang Y."/>
            <person name="Tian X."/>
            <person name="Jiao Y."/>
            <person name="Liang X."/>
            <person name="Jin J."/>
            <person name="Gao L."/>
            <person name="Zheng W."/>
            <person name="Hao B."/>
            <person name="Liu S.-M."/>
            <person name="Wang W."/>
            <person name="Yuan L."/>
            <person name="Cao M."/>
            <person name="McDermott J."/>
            <person name="Samudrala R."/>
            <person name="Wang J."/>
            <person name="Wong G.K.-S."/>
            <person name="Yang H."/>
        </authorList>
    </citation>
    <scope>NUCLEOTIDE SEQUENCE [LARGE SCALE GENOMIC DNA]</scope>
    <source>
        <strain>cv. Nipponbare</strain>
    </source>
</reference>
<reference key="6">
    <citation type="journal article" date="2003" name="Science">
        <title>Collection, mapping, and annotation of over 28,000 cDNA clones from japonica rice.</title>
        <authorList>
            <consortium name="The rice full-length cDNA consortium"/>
        </authorList>
    </citation>
    <scope>NUCLEOTIDE SEQUENCE [LARGE SCALE MRNA]</scope>
    <source>
        <strain>cv. Nipponbare</strain>
    </source>
</reference>
<reference key="7">
    <citation type="journal article" date="2006" name="DNA Res.">
        <title>The rice 14-3-3 gene family and its involvement in responses to biotic and abiotic stress.</title>
        <authorList>
            <person name="Chen F."/>
            <person name="Li Q."/>
            <person name="Sun L."/>
            <person name="He Z."/>
        </authorList>
    </citation>
    <scope>SUBCELLULAR LOCATION</scope>
    <scope>TISSUE SPECIFICITY</scope>
    <scope>INDUCTION</scope>
    <scope>NOMENCLATURE</scope>
</reference>
<feature type="chain" id="PRO_0000246067" description="14-3-3-like protein GF14-E">
    <location>
        <begin position="1"/>
        <end position="262"/>
    </location>
</feature>